<gene>
    <name type="primary">hblA</name>
</gene>
<dbReference type="EMBL" id="L20441">
    <property type="protein sequence ID" value="AAA22522.1"/>
    <property type="molecule type" value="Genomic_DNA"/>
</dbReference>
<dbReference type="PIR" id="A49336">
    <property type="entry name" value="A49336"/>
</dbReference>
<dbReference type="PDB" id="2NRJ">
    <property type="method" value="X-ray"/>
    <property type="resolution" value="2.03 A"/>
    <property type="chains" value="A=32-375"/>
</dbReference>
<dbReference type="PDBsum" id="2NRJ"/>
<dbReference type="SMR" id="P80172"/>
<dbReference type="EvolutionaryTrace" id="P80172"/>
<dbReference type="GO" id="GO:0005576">
    <property type="term" value="C:extracellular region"/>
    <property type="evidence" value="ECO:0007669"/>
    <property type="project" value="UniProtKB-SubCell"/>
</dbReference>
<dbReference type="GO" id="GO:0020002">
    <property type="term" value="C:host cell plasma membrane"/>
    <property type="evidence" value="ECO:0007669"/>
    <property type="project" value="UniProtKB-SubCell"/>
</dbReference>
<dbReference type="GO" id="GO:0016020">
    <property type="term" value="C:membrane"/>
    <property type="evidence" value="ECO:0007669"/>
    <property type="project" value="UniProtKB-KW"/>
</dbReference>
<dbReference type="GO" id="GO:0090729">
    <property type="term" value="F:toxin activity"/>
    <property type="evidence" value="ECO:0007669"/>
    <property type="project" value="UniProtKB-KW"/>
</dbReference>
<dbReference type="GO" id="GO:0031640">
    <property type="term" value="P:killing of cells of another organism"/>
    <property type="evidence" value="ECO:0007669"/>
    <property type="project" value="UniProtKB-KW"/>
</dbReference>
<dbReference type="CDD" id="cd22653">
    <property type="entry name" value="ClyA_HblB-like"/>
    <property type="match status" value="1"/>
</dbReference>
<dbReference type="Gene3D" id="1.20.1170.10">
    <property type="match status" value="1"/>
</dbReference>
<dbReference type="InterPro" id="IPR052785">
    <property type="entry name" value="Enterotoxin_cmpnt"/>
</dbReference>
<dbReference type="InterPro" id="IPR008414">
    <property type="entry name" value="HBL"/>
</dbReference>
<dbReference type="PANTHER" id="PTHR38443">
    <property type="match status" value="1"/>
</dbReference>
<dbReference type="PANTHER" id="PTHR38443:SF2">
    <property type="entry name" value="NON-HEMOLYTIC ENTEROTOXIN LYTIC COMPONENT L1"/>
    <property type="match status" value="1"/>
</dbReference>
<dbReference type="Pfam" id="PF05791">
    <property type="entry name" value="Bacillus_HBL"/>
    <property type="match status" value="1"/>
</dbReference>
<dbReference type="SUPFAM" id="SSF58100">
    <property type="entry name" value="Bacterial hemolysins"/>
    <property type="match status" value="1"/>
</dbReference>
<comment type="function">
    <text>Cytotoxic protein, part of the enterotoxin complex. Responsible for binding to erythrocytes. This enterotoxin is thought to be the cause of the diarrheal form of gastroenteritis caused by food-borne strains of B.cereus.</text>
</comment>
<comment type="subunit">
    <text>Composed of a binding component, B, and two lytic components, L1 and L2. All three subunits act synergically to cause hemolysis.</text>
</comment>
<comment type="subcellular location">
    <subcellularLocation>
        <location>Secreted</location>
    </subcellularLocation>
    <subcellularLocation>
        <location evidence="3">Host cell membrane</location>
    </subcellularLocation>
</comment>
<name>HBLA_BACCE</name>
<keyword id="KW-0002">3D-structure</keyword>
<keyword id="KW-0204">Cytolysis</keyword>
<keyword id="KW-0903">Direct protein sequencing</keyword>
<keyword id="KW-0260">Enterotoxin</keyword>
<keyword id="KW-0354">Hemolysis</keyword>
<keyword id="KW-1032">Host cell membrane</keyword>
<keyword id="KW-1043">Host membrane</keyword>
<keyword id="KW-0472">Membrane</keyword>
<keyword id="KW-0964">Secreted</keyword>
<keyword id="KW-0732">Signal</keyword>
<keyword id="KW-0800">Toxin</keyword>
<keyword id="KW-0812">Transmembrane</keyword>
<keyword id="KW-1133">Transmembrane helix</keyword>
<keyword id="KW-0843">Virulence</keyword>
<evidence type="ECO:0000255" key="1"/>
<evidence type="ECO:0000269" key="2">
    <source>
    </source>
</evidence>
<evidence type="ECO:0000305" key="3"/>
<evidence type="ECO:0007829" key="4">
    <source>
        <dbReference type="PDB" id="2NRJ"/>
    </source>
</evidence>
<reference key="1">
    <citation type="journal article" date="1993" name="J. Bacteriol.">
        <title>Molecular cloning and characterization of the hblA gene encoding the B component of hemolysin BL from Bacillus cereus.</title>
        <authorList>
            <person name="Heinrichs J.H."/>
            <person name="Beecher D.J."/>
            <person name="Macmillan J.D."/>
            <person name="Zilinskas B.A."/>
        </authorList>
    </citation>
    <scope>NUCLEOTIDE SEQUENCE [GENOMIC DNA]</scope>
    <scope>PROTEIN SEQUENCE OF 32-47</scope>
    <source>
        <strain>F837/76</strain>
    </source>
</reference>
<reference key="2">
    <citation type="journal article" date="1993" name="FEMS Microbiol. Lett.">
        <title>Sphingomyelinase is part of the 'enterotoxin complex' produced by Bacillus cereus.</title>
        <authorList>
            <person name="Granum P.E."/>
            <person name="Nissen H."/>
        </authorList>
    </citation>
    <scope>PROTEIN SEQUENCE OF 34-48</scope>
    <source>
        <strain>1230-88</strain>
    </source>
</reference>
<feature type="signal peptide" evidence="2">
    <location>
        <begin position="1"/>
        <end position="31"/>
    </location>
</feature>
<feature type="chain" id="PRO_0000021398" description="Hemolysin BL-binding component">
    <location>
        <begin position="32"/>
        <end position="375"/>
    </location>
</feature>
<feature type="transmembrane region" description="Helical" evidence="1">
    <location>
        <begin position="232"/>
        <end position="252"/>
    </location>
</feature>
<feature type="turn" evidence="4">
    <location>
        <begin position="33"/>
        <end position="36"/>
    </location>
</feature>
<feature type="helix" evidence="4">
    <location>
        <begin position="40"/>
        <end position="42"/>
    </location>
</feature>
<feature type="helix" evidence="4">
    <location>
        <begin position="48"/>
        <end position="74"/>
    </location>
</feature>
<feature type="helix" evidence="4">
    <location>
        <begin position="91"/>
        <end position="111"/>
    </location>
</feature>
<feature type="helix" evidence="4">
    <location>
        <begin position="113"/>
        <end position="144"/>
    </location>
</feature>
<feature type="helix" evidence="4">
    <location>
        <begin position="147"/>
        <end position="202"/>
    </location>
</feature>
<feature type="helix" evidence="4">
    <location>
        <begin position="207"/>
        <end position="217"/>
    </location>
</feature>
<feature type="helix" evidence="4">
    <location>
        <begin position="219"/>
        <end position="221"/>
    </location>
</feature>
<feature type="helix" evidence="4">
    <location>
        <begin position="223"/>
        <end position="225"/>
    </location>
</feature>
<feature type="helix" evidence="4">
    <location>
        <begin position="233"/>
        <end position="235"/>
    </location>
</feature>
<feature type="strand" evidence="4">
    <location>
        <begin position="239"/>
        <end position="244"/>
    </location>
</feature>
<feature type="turn" evidence="4">
    <location>
        <begin position="245"/>
        <end position="247"/>
    </location>
</feature>
<feature type="strand" evidence="4">
    <location>
        <begin position="248"/>
        <end position="253"/>
    </location>
</feature>
<feature type="helix" evidence="4">
    <location>
        <begin position="254"/>
        <end position="256"/>
    </location>
</feature>
<feature type="helix" evidence="4">
    <location>
        <begin position="257"/>
        <end position="268"/>
    </location>
</feature>
<feature type="helix" evidence="4">
    <location>
        <begin position="273"/>
        <end position="326"/>
    </location>
</feature>
<feature type="turn" evidence="4">
    <location>
        <begin position="332"/>
        <end position="335"/>
    </location>
</feature>
<feature type="helix" evidence="4">
    <location>
        <begin position="336"/>
        <end position="338"/>
    </location>
</feature>
<feature type="helix" evidence="4">
    <location>
        <begin position="339"/>
        <end position="364"/>
    </location>
</feature>
<accession>P80172</accession>
<organism>
    <name type="scientific">Bacillus cereus</name>
    <dbReference type="NCBI Taxonomy" id="1396"/>
    <lineage>
        <taxon>Bacteria</taxon>
        <taxon>Bacillati</taxon>
        <taxon>Bacillota</taxon>
        <taxon>Bacilli</taxon>
        <taxon>Bacillales</taxon>
        <taxon>Bacillaceae</taxon>
        <taxon>Bacillus</taxon>
        <taxon>Bacillus cereus group</taxon>
    </lineage>
</organism>
<proteinExistence type="evidence at protein level"/>
<protein>
    <recommendedName>
        <fullName>Hemolysin BL-binding component</fullName>
    </recommendedName>
    <alternativeName>
        <fullName>Enterotoxin 40 kDa subunit</fullName>
    </alternativeName>
</protein>
<sequence length="375" mass="41567">MIKKIPYKLLAVSTLLTITTANVVSPVATFASEIEQTNNGDTALSANEAKMKETLQKAGLFAKSMNAYSYMLIKNPDVNFEGITINGYVDLPGRIVQDQKNARAHAVTWDTKVKKQLLDTLTGIVEYDTTFDNYYETMVEAINTGDGETLKEGITDLRGEIQQNQKYAQQLIEELTKLRDSIGHDVRAFGSNKELLQSILKNQGADVDADQKRLEEVLGSVNYYKQLESDGFNVMKGAILGLPIIGGIIVGVARDNLGKLEPLLAELRQTVDYKVTLNRVVGVAYSNINEIDKALDDAINALTYMSTQWHDLDSQYSGVLGHIENAAQKADQNKFKFLKPNLNAAKDSWKTLRTDAVTLKEGIKELKVETVTPQK</sequence>